<evidence type="ECO:0000255" key="1">
    <source>
        <dbReference type="PROSITE-ProRule" id="PRU00037"/>
    </source>
</evidence>
<evidence type="ECO:0000269" key="2">
    <source>
    </source>
</evidence>
<accession>Q9JFS4</accession>
<proteinExistence type="evidence at protein level"/>
<feature type="chain" id="PRO_0000396129" description="Kelch repeat and BTB domain-containing protein 2">
    <location>
        <begin position="1"/>
        <end position="559"/>
    </location>
</feature>
<feature type="domain" description="BTB" evidence="1">
    <location>
        <begin position="26"/>
        <end position="95"/>
    </location>
</feature>
<feature type="domain" description="BACK">
    <location>
        <begin position="128"/>
        <end position="223"/>
    </location>
</feature>
<feature type="repeat" description="Kelch 1">
    <location>
        <begin position="305"/>
        <end position="352"/>
    </location>
</feature>
<feature type="repeat" description="Kelch 2">
    <location>
        <begin position="353"/>
        <end position="399"/>
    </location>
</feature>
<feature type="repeat" description="Kelch 3">
    <location>
        <begin position="401"/>
        <end position="463"/>
    </location>
</feature>
<name>KBTB2_ECTVM</name>
<reference key="1">
    <citation type="submission" date="2002-06" db="EMBL/GenBank/DDBJ databases">
        <title>The genomic sequence of Ectromelia virus, the causative agent of mousepox.</title>
        <authorList>
            <person name="Chen N."/>
            <person name="Danila M.I."/>
            <person name="Feng Z."/>
            <person name="Buller M.L."/>
            <person name="Wang C."/>
            <person name="Han X."/>
            <person name="Lefkowitz E."/>
            <person name="Upton C."/>
        </authorList>
    </citation>
    <scope>NUCLEOTIDE SEQUENCE [LARGE SCALE GENOMIC DNA]</scope>
</reference>
<reference key="2">
    <citation type="journal article" date="2008" name="Virology">
        <title>Ectromelia virus BTB/kelch proteins, EVM150 and EVM167, interact with cullin-3-based ubiquitin ligases.</title>
        <authorList>
            <person name="Wilton B.A."/>
            <person name="Campbell S."/>
            <person name="Van Buuren N."/>
            <person name="Garneau R."/>
            <person name="Furukawa M."/>
            <person name="Xiong Y."/>
            <person name="Barry M."/>
        </authorList>
    </citation>
    <scope>FUNCTION</scope>
    <scope>SUBCELLULAR LOCATION</scope>
    <scope>INTERACTION WITH HOST CUL3</scope>
    <scope>DOMAIN BTB AND KELCH</scope>
</reference>
<comment type="function">
    <text evidence="2">Probable substrate-specific adapter of CUL3-containing E3 ubiquitin-protein ligases which mediate the ubiquitination and subsequent proteasomal degradation of host target proteins.</text>
</comment>
<comment type="subunit">
    <text evidence="2">Interacts (via BTB domain) with host CUL3.</text>
</comment>
<comment type="subcellular location">
    <subcellularLocation>
        <location evidence="2">Host cytoplasm</location>
    </subcellularLocation>
</comment>
<comment type="domain">
    <text evidence="2">The BTB domain is responsible for the interaction with CUL3 while the Kelch repeat domains supposely serve to recruit the cellular substrates.</text>
</comment>
<dbReference type="EMBL" id="AF012825">
    <property type="protein sequence ID" value="AAC99572.1"/>
    <property type="molecule type" value="Genomic_DNA"/>
</dbReference>
<dbReference type="RefSeq" id="NP_671686.1">
    <property type="nucleotide sequence ID" value="NC_004105.1"/>
</dbReference>
<dbReference type="SMR" id="Q9JFS4"/>
<dbReference type="GeneID" id="951519"/>
<dbReference type="KEGG" id="vg:951519"/>
<dbReference type="Proteomes" id="UP000172110">
    <property type="component" value="Segment"/>
</dbReference>
<dbReference type="GO" id="GO:0030430">
    <property type="term" value="C:host cell cytoplasm"/>
    <property type="evidence" value="ECO:0007669"/>
    <property type="project" value="UniProtKB-SubCell"/>
</dbReference>
<dbReference type="GO" id="GO:0039648">
    <property type="term" value="P:symbiont-mediated perturbation of host ubiquitin-like protein modification"/>
    <property type="evidence" value="ECO:0007669"/>
    <property type="project" value="UniProtKB-KW"/>
</dbReference>
<dbReference type="CDD" id="cd18186">
    <property type="entry name" value="BTB_POZ_ZBTB_KLHL-like"/>
    <property type="match status" value="1"/>
</dbReference>
<dbReference type="Gene3D" id="2.120.10.80">
    <property type="entry name" value="Kelch-type beta propeller"/>
    <property type="match status" value="1"/>
</dbReference>
<dbReference type="Gene3D" id="3.30.710.10">
    <property type="entry name" value="Potassium Channel Kv1.1, Chain A"/>
    <property type="match status" value="1"/>
</dbReference>
<dbReference type="InterPro" id="IPR011705">
    <property type="entry name" value="BACK"/>
</dbReference>
<dbReference type="InterPro" id="IPR000210">
    <property type="entry name" value="BTB/POZ_dom"/>
</dbReference>
<dbReference type="InterPro" id="IPR015915">
    <property type="entry name" value="Kelch-typ_b-propeller"/>
</dbReference>
<dbReference type="InterPro" id="IPR006652">
    <property type="entry name" value="Kelch_1"/>
</dbReference>
<dbReference type="InterPro" id="IPR011333">
    <property type="entry name" value="SKP1/BTB/POZ_sf"/>
</dbReference>
<dbReference type="PANTHER" id="PTHR45632:SF3">
    <property type="entry name" value="KELCH-LIKE PROTEIN 32"/>
    <property type="match status" value="1"/>
</dbReference>
<dbReference type="PANTHER" id="PTHR45632">
    <property type="entry name" value="LD33804P"/>
    <property type="match status" value="1"/>
</dbReference>
<dbReference type="Pfam" id="PF07707">
    <property type="entry name" value="BACK"/>
    <property type="match status" value="1"/>
</dbReference>
<dbReference type="Pfam" id="PF00651">
    <property type="entry name" value="BTB"/>
    <property type="match status" value="1"/>
</dbReference>
<dbReference type="Pfam" id="PF24681">
    <property type="entry name" value="Kelch_KLHDC2_KLHL20_DRC7"/>
    <property type="match status" value="1"/>
</dbReference>
<dbReference type="SMART" id="SM00225">
    <property type="entry name" value="BTB"/>
    <property type="match status" value="1"/>
</dbReference>
<dbReference type="SMART" id="SM00612">
    <property type="entry name" value="Kelch"/>
    <property type="match status" value="3"/>
</dbReference>
<dbReference type="SUPFAM" id="SSF117281">
    <property type="entry name" value="Kelch motif"/>
    <property type="match status" value="1"/>
</dbReference>
<dbReference type="SUPFAM" id="SSF54695">
    <property type="entry name" value="POZ domain"/>
    <property type="match status" value="1"/>
</dbReference>
<dbReference type="PROSITE" id="PS50097">
    <property type="entry name" value="BTB"/>
    <property type="match status" value="1"/>
</dbReference>
<organismHost>
    <name type="scientific">Mus musculus</name>
    <name type="common">Mouse</name>
    <dbReference type="NCBI Taxonomy" id="10090"/>
</organismHost>
<protein>
    <recommendedName>
        <fullName>Kelch repeat and BTB domain-containing protein 2</fullName>
    </recommendedName>
</protein>
<organism>
    <name type="scientific">Ectromelia virus (strain Moscow)</name>
    <name type="common">ECTV</name>
    <name type="synonym">Mousepox virus</name>
    <dbReference type="NCBI Taxonomy" id="265874"/>
    <lineage>
        <taxon>Viruses</taxon>
        <taxon>Varidnaviria</taxon>
        <taxon>Bamfordvirae</taxon>
        <taxon>Nucleocytoviricota</taxon>
        <taxon>Pokkesviricetes</taxon>
        <taxon>Chitovirales</taxon>
        <taxon>Poxviridae</taxon>
        <taxon>Chordopoxvirinae</taxon>
        <taxon>Orthopoxvirus</taxon>
        <taxon>Ectromelia virus</taxon>
    </lineage>
</organism>
<keyword id="KW-1035">Host cytoplasm</keyword>
<keyword id="KW-0945">Host-virus interaction</keyword>
<keyword id="KW-0880">Kelch repeat</keyword>
<keyword id="KW-1123">Modulation of host E3 ubiquitin ligases by virus</keyword>
<keyword id="KW-1130">Modulation of host ubiquitin pathway by virus</keyword>
<keyword id="KW-0677">Repeat</keyword>
<keyword id="KW-0833">Ubl conjugation pathway</keyword>
<sequence length="559" mass="65192">MDIDDIKHNRRVVSNISSLLDNDILCDVIITIGDGEEIKAHKTILAAGSKYFRTLFTTPMIIRDLVTRVNLQMFDKDAVKNIVQYLYNRHISSMNVIDVLKCADYLLIDDLVTDCESYVKDYTNHDTCIYIYHRLYEMSHIPIVKYVKRMVMRNIPTLITTDAFKNAVFEILLDIISTNDGEYVYREGYKVTILLKWLDYNYITEEQLLCILSCIDIQNLDKKSRLLLYSNTTINMYSSCVKFLLDNKQNRNIIPRQLCLVYHDTNYNISNPCILVYNINTMEYNTIYTIHNNIINYSSAVVDNEIIIAGGYNFNNISLNKVYKINIEHRTCVELPPMIKNRCHFSLAVIDDMIYAIGGQNGTIVERSVECYTMGDDTWKMLPDMPDAISSYGMCVFDQYIYIIGGRTEHVKYIPVQHMNEIVDINEHSSDKVIRYDTVNNIWEKLPNLCSGTIRPSVVSHKDDIYVVCDIKDDEINGFKTCIFRYNTKDNYKGWELITTIDSKLTVLHTILHDDAITILHWYESCMIQDKFNIDTYKWTNICYQRSNSYIVHDTLPIY</sequence>
<gene>
    <name type="primary">KBTB2</name>
    <name type="ordered locus">C13R</name>
</gene>